<name>RADA_STRP8</name>
<organism>
    <name type="scientific">Streptococcus pyogenes serotype M18 (strain MGAS8232)</name>
    <dbReference type="NCBI Taxonomy" id="186103"/>
    <lineage>
        <taxon>Bacteria</taxon>
        <taxon>Bacillati</taxon>
        <taxon>Bacillota</taxon>
        <taxon>Bacilli</taxon>
        <taxon>Lactobacillales</taxon>
        <taxon>Streptococcaceae</taxon>
        <taxon>Streptococcus</taxon>
    </lineage>
</organism>
<sequence length="453" mass="49387">MAKKKATFICQECGYQSPKYLGRCPNCSAWSSFVEEVEVKEVKNARVSLAGEKSRPVKLKDVDNISYHRTQTDMSEFNRVLGGGVVPGSLILIGGDPGIGKSTLLLQVSTQLANKGTVLYVSGEESAEQIKLRSERLGDIDNEFYLYAETNMQAIRTEIENIKPDFLIIDSIQTIMSPDITGVQGSVSQVREVTAELMQLAKTNNIATFIVGHVTKEGTLAGPRMLEHMVDTVLYFEGERHHTFRILRAVKNRFGSTNEIGIFEMQSGGLVEVLNPSQVFLEERLDGATGSAVVVTMEGSRPILAEVQSLVTPTVFGNARRTTTGLDFNRVSLIMAVLEKRCGLLLQNQDAYLKSAGGVKLDEPAIDLAVAVAIASSYKEKPTSPQEAFLGEIGLTGEIRRVTRIEQRINEAAKLGFTKVYAPKNALQGIDIPQGIEVVGVTTVGQVLKAVFS</sequence>
<reference key="1">
    <citation type="journal article" date="2002" name="Proc. Natl. Acad. Sci. U.S.A.">
        <title>Genome sequence and comparative microarray analysis of serotype M18 group A Streptococcus strains associated with acute rheumatic fever outbreaks.</title>
        <authorList>
            <person name="Smoot J.C."/>
            <person name="Barbian K.D."/>
            <person name="Van Gompel J.J."/>
            <person name="Smoot L.M."/>
            <person name="Chaussee M.S."/>
            <person name="Sylva G.L."/>
            <person name="Sturdevant D.E."/>
            <person name="Ricklefs S.M."/>
            <person name="Porcella S.F."/>
            <person name="Parkins L.D."/>
            <person name="Beres S.B."/>
            <person name="Campbell D.S."/>
            <person name="Smith T.M."/>
            <person name="Zhang Q."/>
            <person name="Kapur V."/>
            <person name="Daly J.A."/>
            <person name="Veasy L.G."/>
            <person name="Musser J.M."/>
        </authorList>
    </citation>
    <scope>NUCLEOTIDE SEQUENCE [LARGE SCALE GENOMIC DNA]</scope>
    <source>
        <strain>MGAS8232</strain>
    </source>
</reference>
<comment type="function">
    <text evidence="1">DNA-dependent ATPase involved in processing of recombination intermediates, plays a role in repairing DNA breaks. Stimulates the branch migration of RecA-mediated strand transfer reactions, allowing the 3' invading strand to extend heteroduplex DNA faster. Binds ssDNA in the presence of ADP but not other nucleotides, has ATPase activity that is stimulated by ssDNA and various branched DNA structures, but inhibited by SSB. Does not have RecA's homology-searching function.</text>
</comment>
<comment type="domain">
    <text evidence="1">Has a putative N-terminal zinc-finger, a middle region with homology to RecA with ATPase motifs including the RadA KNRFG motif, while the C-terminus is homologous to Lon protease.</text>
</comment>
<comment type="similarity">
    <text evidence="1">Belongs to the RecA family. RadA subfamily.</text>
</comment>
<proteinExistence type="inferred from homology"/>
<protein>
    <recommendedName>
        <fullName evidence="1">DNA repair protein RadA</fullName>
        <ecNumber evidence="1">3.6.4.-</ecNumber>
    </recommendedName>
    <alternativeName>
        <fullName evidence="1">Branch migration protein RadA</fullName>
    </alternativeName>
</protein>
<feature type="chain" id="PRO_0000187941" description="DNA repair protein RadA">
    <location>
        <begin position="1"/>
        <end position="453"/>
    </location>
</feature>
<feature type="zinc finger region" description="C4-type" evidence="1">
    <location>
        <begin position="10"/>
        <end position="27"/>
    </location>
</feature>
<feature type="region of interest" description="Lon-protease-like" evidence="1">
    <location>
        <begin position="350"/>
        <end position="453"/>
    </location>
</feature>
<feature type="short sequence motif" description="RadA KNRFG motif" evidence="1">
    <location>
        <begin position="251"/>
        <end position="255"/>
    </location>
</feature>
<feature type="binding site" evidence="1">
    <location>
        <begin position="95"/>
        <end position="102"/>
    </location>
    <ligand>
        <name>ATP</name>
        <dbReference type="ChEBI" id="CHEBI:30616"/>
    </ligand>
</feature>
<dbReference type="EC" id="3.6.4.-" evidence="1"/>
<dbReference type="EMBL" id="AE009949">
    <property type="protein sequence ID" value="AAL97007.1"/>
    <property type="molecule type" value="Genomic_DNA"/>
</dbReference>
<dbReference type="RefSeq" id="WP_002986109.1">
    <property type="nucleotide sequence ID" value="NC_003485.1"/>
</dbReference>
<dbReference type="SMR" id="Q8P2Q5"/>
<dbReference type="MEROPS" id="S16.A04"/>
<dbReference type="KEGG" id="spm:spyM18_0220"/>
<dbReference type="HOGENOM" id="CLU_018264_0_1_9"/>
<dbReference type="GO" id="GO:0005829">
    <property type="term" value="C:cytosol"/>
    <property type="evidence" value="ECO:0007669"/>
    <property type="project" value="TreeGrafter"/>
</dbReference>
<dbReference type="GO" id="GO:0005524">
    <property type="term" value="F:ATP binding"/>
    <property type="evidence" value="ECO:0007669"/>
    <property type="project" value="UniProtKB-UniRule"/>
</dbReference>
<dbReference type="GO" id="GO:0016887">
    <property type="term" value="F:ATP hydrolysis activity"/>
    <property type="evidence" value="ECO:0007669"/>
    <property type="project" value="InterPro"/>
</dbReference>
<dbReference type="GO" id="GO:0140664">
    <property type="term" value="F:ATP-dependent DNA damage sensor activity"/>
    <property type="evidence" value="ECO:0007669"/>
    <property type="project" value="InterPro"/>
</dbReference>
<dbReference type="GO" id="GO:0003684">
    <property type="term" value="F:damaged DNA binding"/>
    <property type="evidence" value="ECO:0007669"/>
    <property type="project" value="InterPro"/>
</dbReference>
<dbReference type="GO" id="GO:0008270">
    <property type="term" value="F:zinc ion binding"/>
    <property type="evidence" value="ECO:0007669"/>
    <property type="project" value="UniProtKB-KW"/>
</dbReference>
<dbReference type="GO" id="GO:0000725">
    <property type="term" value="P:recombinational repair"/>
    <property type="evidence" value="ECO:0007669"/>
    <property type="project" value="UniProtKB-UniRule"/>
</dbReference>
<dbReference type="CDD" id="cd01121">
    <property type="entry name" value="RadA_SMS_N"/>
    <property type="match status" value="1"/>
</dbReference>
<dbReference type="FunFam" id="3.30.230.10:FF:000031">
    <property type="entry name" value="DNA repair protein RadA"/>
    <property type="match status" value="1"/>
</dbReference>
<dbReference type="FunFam" id="3.40.50.300:FF:000050">
    <property type="entry name" value="DNA repair protein RadA"/>
    <property type="match status" value="1"/>
</dbReference>
<dbReference type="Gene3D" id="3.30.230.10">
    <property type="match status" value="1"/>
</dbReference>
<dbReference type="Gene3D" id="3.40.50.300">
    <property type="entry name" value="P-loop containing nucleotide triphosphate hydrolases"/>
    <property type="match status" value="1"/>
</dbReference>
<dbReference type="HAMAP" id="MF_01498">
    <property type="entry name" value="RadA_bact"/>
    <property type="match status" value="1"/>
</dbReference>
<dbReference type="InterPro" id="IPR003593">
    <property type="entry name" value="AAA+_ATPase"/>
</dbReference>
<dbReference type="InterPro" id="IPR004504">
    <property type="entry name" value="DNA_repair_RadA"/>
</dbReference>
<dbReference type="InterPro" id="IPR027417">
    <property type="entry name" value="P-loop_NTPase"/>
</dbReference>
<dbReference type="InterPro" id="IPR020588">
    <property type="entry name" value="RecA_ATP-bd"/>
</dbReference>
<dbReference type="InterPro" id="IPR020568">
    <property type="entry name" value="Ribosomal_Su5_D2-typ_SF"/>
</dbReference>
<dbReference type="InterPro" id="IPR014721">
    <property type="entry name" value="Ribsml_uS5_D2-typ_fold_subgr"/>
</dbReference>
<dbReference type="InterPro" id="IPR041166">
    <property type="entry name" value="Rubredoxin_2"/>
</dbReference>
<dbReference type="NCBIfam" id="TIGR00416">
    <property type="entry name" value="sms"/>
    <property type="match status" value="1"/>
</dbReference>
<dbReference type="PANTHER" id="PTHR32472">
    <property type="entry name" value="DNA REPAIR PROTEIN RADA"/>
    <property type="match status" value="1"/>
</dbReference>
<dbReference type="PANTHER" id="PTHR32472:SF10">
    <property type="entry name" value="DNA REPAIR PROTEIN RADA-LIKE PROTEIN"/>
    <property type="match status" value="1"/>
</dbReference>
<dbReference type="Pfam" id="PF13481">
    <property type="entry name" value="AAA_25"/>
    <property type="match status" value="1"/>
</dbReference>
<dbReference type="Pfam" id="PF13541">
    <property type="entry name" value="ChlI"/>
    <property type="match status" value="1"/>
</dbReference>
<dbReference type="Pfam" id="PF18073">
    <property type="entry name" value="Zn_ribbon_LapB"/>
    <property type="match status" value="1"/>
</dbReference>
<dbReference type="PRINTS" id="PR01874">
    <property type="entry name" value="DNAREPAIRADA"/>
</dbReference>
<dbReference type="SMART" id="SM00382">
    <property type="entry name" value="AAA"/>
    <property type="match status" value="1"/>
</dbReference>
<dbReference type="SUPFAM" id="SSF52540">
    <property type="entry name" value="P-loop containing nucleoside triphosphate hydrolases"/>
    <property type="match status" value="1"/>
</dbReference>
<dbReference type="SUPFAM" id="SSF54211">
    <property type="entry name" value="Ribosomal protein S5 domain 2-like"/>
    <property type="match status" value="1"/>
</dbReference>
<dbReference type="PROSITE" id="PS50162">
    <property type="entry name" value="RECA_2"/>
    <property type="match status" value="1"/>
</dbReference>
<keyword id="KW-0067">ATP-binding</keyword>
<keyword id="KW-0227">DNA damage</keyword>
<keyword id="KW-0234">DNA repair</keyword>
<keyword id="KW-0238">DNA-binding</keyword>
<keyword id="KW-0378">Hydrolase</keyword>
<keyword id="KW-0479">Metal-binding</keyword>
<keyword id="KW-0547">Nucleotide-binding</keyword>
<keyword id="KW-0346">Stress response</keyword>
<keyword id="KW-0862">Zinc</keyword>
<keyword id="KW-0863">Zinc-finger</keyword>
<gene>
    <name evidence="1" type="primary">radA</name>
    <name type="ordered locus">spyM18_0220</name>
</gene>
<accession>Q8P2Q5</accession>
<evidence type="ECO:0000255" key="1">
    <source>
        <dbReference type="HAMAP-Rule" id="MF_01498"/>
    </source>
</evidence>